<keyword id="KW-0028">Amino-acid biosynthesis</keyword>
<keyword id="KW-0963">Cytoplasm</keyword>
<keyword id="KW-0378">Hydrolase</keyword>
<keyword id="KW-0460">Magnesium</keyword>
<keyword id="KW-0479">Metal-binding</keyword>
<keyword id="KW-0486">Methionine biosynthesis</keyword>
<keyword id="KW-0539">Nucleus</keyword>
<gene>
    <name evidence="1" type="primary">UTR4</name>
    <name type="ORF">SCY_1459</name>
</gene>
<proteinExistence type="inferred from homology"/>
<accession>A6ZQR2</accession>
<reference key="1">
    <citation type="journal article" date="2007" name="Proc. Natl. Acad. Sci. U.S.A.">
        <title>Genome sequencing and comparative analysis of Saccharomyces cerevisiae strain YJM789.</title>
        <authorList>
            <person name="Wei W."/>
            <person name="McCusker J.H."/>
            <person name="Hyman R.W."/>
            <person name="Jones T."/>
            <person name="Ning Y."/>
            <person name="Cao Z."/>
            <person name="Gu Z."/>
            <person name="Bruno D."/>
            <person name="Miranda M."/>
            <person name="Nguyen M."/>
            <person name="Wilhelmy J."/>
            <person name="Komp C."/>
            <person name="Tamse R."/>
            <person name="Wang X."/>
            <person name="Jia P."/>
            <person name="Luedi P."/>
            <person name="Oefner P.J."/>
            <person name="David L."/>
            <person name="Dietrich F.S."/>
            <person name="Li Y."/>
            <person name="Davis R.W."/>
            <person name="Steinmetz L.M."/>
        </authorList>
    </citation>
    <scope>NUCLEOTIDE SEQUENCE [LARGE SCALE GENOMIC DNA]</scope>
    <source>
        <strain>YJM789</strain>
    </source>
</reference>
<evidence type="ECO:0000255" key="1">
    <source>
        <dbReference type="HAMAP-Rule" id="MF_03117"/>
    </source>
</evidence>
<evidence type="ECO:0000305" key="2"/>
<comment type="function">
    <text evidence="1">Bifunctional enzyme that catalyzes the enolization of 2,3-diketo-5-methylthiopentyl-1-phosphate (DK-MTP-1-P) into the intermediate 2-hydroxy-3-keto-5-methylthiopentenyl-1-phosphate (HK-MTPenyl-1-P), which is then dephosphorylated to form the acireductone 1,2-dihydroxy-3-keto-5-methylthiopentene (DHK-MTPene).</text>
</comment>
<comment type="catalytic activity">
    <reaction evidence="1">
        <text>5-methylsulfanyl-2,3-dioxopentyl phosphate + H2O = 1,2-dihydroxy-5-(methylsulfanyl)pent-1-en-3-one + phosphate</text>
        <dbReference type="Rhea" id="RHEA:21700"/>
        <dbReference type="ChEBI" id="CHEBI:15377"/>
        <dbReference type="ChEBI" id="CHEBI:43474"/>
        <dbReference type="ChEBI" id="CHEBI:49252"/>
        <dbReference type="ChEBI" id="CHEBI:58828"/>
        <dbReference type="EC" id="3.1.3.77"/>
    </reaction>
</comment>
<comment type="cofactor">
    <cofactor evidence="1">
        <name>Mg(2+)</name>
        <dbReference type="ChEBI" id="CHEBI:18420"/>
    </cofactor>
    <text evidence="1">Binds 1 Mg(2+) ion per subunit.</text>
</comment>
<comment type="pathway">
    <text evidence="1">Amino-acid biosynthesis; L-methionine biosynthesis via salvage pathway; L-methionine from S-methyl-5-thio-alpha-D-ribose 1-phosphate: step 3/6.</text>
</comment>
<comment type="pathway">
    <text evidence="1">Amino-acid biosynthesis; L-methionine biosynthesis via salvage pathway; L-methionine from S-methyl-5-thio-alpha-D-ribose 1-phosphate: step 4/6.</text>
</comment>
<comment type="subunit">
    <text evidence="1">Monomer.</text>
</comment>
<comment type="subcellular location">
    <subcellularLocation>
        <location evidence="1">Cytoplasm</location>
    </subcellularLocation>
    <subcellularLocation>
        <location evidence="1">Nucleus</location>
    </subcellularLocation>
</comment>
<comment type="similarity">
    <text evidence="1">Belongs to the HAD-like hydrolase superfamily. MasA/MtnC family.</text>
</comment>
<comment type="sequence caution" evidence="2">
    <conflict type="erroneous initiation">
        <sequence resource="EMBL-CDS" id="EDN62932"/>
    </conflict>
    <text>Extended N-terminus.</text>
</comment>
<sequence length="227" mass="25179">MGDNYSTYLLDIEGTVCPISFVKETLFPYFTNKVPQLVQQDTRDSPVSNILSQFHIDDKEQLQAHILELVAKDVKDPILKQLQGYVWAQGYESGQIKAPVYADAIDFIKRKKRVFIYSSGSVKAQKLLFGYVQDPNAPAHDSLDLNSYIDGYFDINTSGKKTETQSYANILRDIGAKASEVLFLSDNPLELDAAAGVGIATGLASRPGNAPVPDGQKYQVYKNFETL</sequence>
<dbReference type="EC" id="3.1.3.77" evidence="1"/>
<dbReference type="EMBL" id="AAFW02000048">
    <property type="protein sequence ID" value="EDN62932.1"/>
    <property type="status" value="ALT_INIT"/>
    <property type="molecule type" value="Genomic_DNA"/>
</dbReference>
<dbReference type="SMR" id="A6ZQR2"/>
<dbReference type="HOGENOM" id="CLU_023273_1_1_1"/>
<dbReference type="OrthoDB" id="27667at4893"/>
<dbReference type="UniPathway" id="UPA00904">
    <property type="reaction ID" value="UER00876"/>
</dbReference>
<dbReference type="UniPathway" id="UPA00904">
    <property type="reaction ID" value="UER00877"/>
</dbReference>
<dbReference type="Proteomes" id="UP000007060">
    <property type="component" value="Unassembled WGS sequence"/>
</dbReference>
<dbReference type="GO" id="GO:0005737">
    <property type="term" value="C:cytoplasm"/>
    <property type="evidence" value="ECO:0007669"/>
    <property type="project" value="UniProtKB-SubCell"/>
</dbReference>
<dbReference type="GO" id="GO:0005634">
    <property type="term" value="C:nucleus"/>
    <property type="evidence" value="ECO:0007669"/>
    <property type="project" value="UniProtKB-SubCell"/>
</dbReference>
<dbReference type="GO" id="GO:0043874">
    <property type="term" value="F:acireductone synthase activity"/>
    <property type="evidence" value="ECO:0007669"/>
    <property type="project" value="UniProtKB-EC"/>
</dbReference>
<dbReference type="GO" id="GO:0000287">
    <property type="term" value="F:magnesium ion binding"/>
    <property type="evidence" value="ECO:0007669"/>
    <property type="project" value="UniProtKB-UniRule"/>
</dbReference>
<dbReference type="GO" id="GO:0019509">
    <property type="term" value="P:L-methionine salvage from methylthioadenosine"/>
    <property type="evidence" value="ECO:0007669"/>
    <property type="project" value="UniProtKB-UniRule"/>
</dbReference>
<dbReference type="CDD" id="cd01629">
    <property type="entry name" value="HAD_EP"/>
    <property type="match status" value="1"/>
</dbReference>
<dbReference type="FunFam" id="3.40.50.1000:FF:000079">
    <property type="entry name" value="Enolase-phosphatase E1"/>
    <property type="match status" value="1"/>
</dbReference>
<dbReference type="Gene3D" id="1.10.720.60">
    <property type="match status" value="1"/>
</dbReference>
<dbReference type="Gene3D" id="3.40.50.1000">
    <property type="entry name" value="HAD superfamily/HAD-like"/>
    <property type="match status" value="1"/>
</dbReference>
<dbReference type="HAMAP" id="MF_03117">
    <property type="entry name" value="Salvage_MtnC_euk"/>
    <property type="match status" value="1"/>
</dbReference>
<dbReference type="InterPro" id="IPR023943">
    <property type="entry name" value="Enolase-ppase_E1"/>
</dbReference>
<dbReference type="InterPro" id="IPR027511">
    <property type="entry name" value="ENOPH1_eukaryotes"/>
</dbReference>
<dbReference type="InterPro" id="IPR036412">
    <property type="entry name" value="HAD-like_sf"/>
</dbReference>
<dbReference type="InterPro" id="IPR023214">
    <property type="entry name" value="HAD_sf"/>
</dbReference>
<dbReference type="NCBIfam" id="TIGR01691">
    <property type="entry name" value="enolase-ppase"/>
    <property type="match status" value="1"/>
</dbReference>
<dbReference type="PANTHER" id="PTHR20371">
    <property type="entry name" value="ENOLASE-PHOSPHATASE E1"/>
    <property type="match status" value="1"/>
</dbReference>
<dbReference type="PANTHER" id="PTHR20371:SF1">
    <property type="entry name" value="ENOLASE-PHOSPHATASE E1"/>
    <property type="match status" value="1"/>
</dbReference>
<dbReference type="Pfam" id="PF00702">
    <property type="entry name" value="Hydrolase"/>
    <property type="match status" value="1"/>
</dbReference>
<dbReference type="SFLD" id="SFLDG01129">
    <property type="entry name" value="C1.5:_HAD__Beta-PGM__Phosphata"/>
    <property type="match status" value="1"/>
</dbReference>
<dbReference type="SFLD" id="SFLDF00044">
    <property type="entry name" value="enolase-phosphatase"/>
    <property type="match status" value="1"/>
</dbReference>
<dbReference type="SUPFAM" id="SSF56784">
    <property type="entry name" value="HAD-like"/>
    <property type="match status" value="1"/>
</dbReference>
<feature type="chain" id="PRO_0000377658" description="Enolase-phosphatase E1">
    <location>
        <begin position="1"/>
        <end position="227"/>
    </location>
</feature>
<feature type="binding site" evidence="1">
    <location>
        <position position="11"/>
    </location>
    <ligand>
        <name>Mg(2+)</name>
        <dbReference type="ChEBI" id="CHEBI:18420"/>
    </ligand>
</feature>
<feature type="binding site" evidence="1">
    <location>
        <position position="13"/>
    </location>
    <ligand>
        <name>Mg(2+)</name>
        <dbReference type="ChEBI" id="CHEBI:18420"/>
    </ligand>
</feature>
<feature type="binding site" evidence="1">
    <location>
        <begin position="118"/>
        <end position="119"/>
    </location>
    <ligand>
        <name>substrate</name>
    </ligand>
</feature>
<feature type="binding site" evidence="1">
    <location>
        <position position="161"/>
    </location>
    <ligand>
        <name>substrate</name>
    </ligand>
</feature>
<feature type="binding site" evidence="1">
    <location>
        <position position="186"/>
    </location>
    <ligand>
        <name>Mg(2+)</name>
        <dbReference type="ChEBI" id="CHEBI:18420"/>
    </ligand>
</feature>
<organism>
    <name type="scientific">Saccharomyces cerevisiae (strain YJM789)</name>
    <name type="common">Baker's yeast</name>
    <dbReference type="NCBI Taxonomy" id="307796"/>
    <lineage>
        <taxon>Eukaryota</taxon>
        <taxon>Fungi</taxon>
        <taxon>Dikarya</taxon>
        <taxon>Ascomycota</taxon>
        <taxon>Saccharomycotina</taxon>
        <taxon>Saccharomycetes</taxon>
        <taxon>Saccharomycetales</taxon>
        <taxon>Saccharomycetaceae</taxon>
        <taxon>Saccharomyces</taxon>
    </lineage>
</organism>
<name>ENOPH_YEAS7</name>
<protein>
    <recommendedName>
        <fullName evidence="1">Enolase-phosphatase E1</fullName>
        <ecNumber evidence="1">3.1.3.77</ecNumber>
    </recommendedName>
    <alternativeName>
        <fullName evidence="1">2,3-diketo-5-methylthio-1-phosphopentane phosphatase</fullName>
    </alternativeName>
    <alternativeName>
        <fullName evidence="1">Unknown transcript 4 protein</fullName>
    </alternativeName>
</protein>